<reference key="1">
    <citation type="journal article" date="1989" name="Nature">
        <title>An African primate lentivirus (SIVsm) closely related to HIV-2.</title>
        <authorList>
            <person name="Hirsch V.M."/>
            <person name="Olmstead R.A."/>
            <person name="Murphey-Corb M."/>
            <person name="Purcell R.H."/>
            <person name="Johnson P.R."/>
        </authorList>
    </citation>
    <scope>NUCLEOTIDE SEQUENCE [GENOMIC DNA]</scope>
</reference>
<dbReference type="EC" id="3.4.23.16"/>
<dbReference type="EC" id="2.7.7.49"/>
<dbReference type="EC" id="2.7.7.7"/>
<dbReference type="EC" id="3.1.26.13"/>
<dbReference type="EC" id="3.1.13.2"/>
<dbReference type="EC" id="2.7.7.-" evidence="4"/>
<dbReference type="EC" id="3.1.-.-" evidence="4"/>
<dbReference type="EMBL" id="X14307">
    <property type="status" value="NOT_ANNOTATED_CDS"/>
    <property type="molecule type" value="Genomic_DNA"/>
</dbReference>
<dbReference type="BMRB" id="P12502"/>
<dbReference type="SMR" id="P12502"/>
<dbReference type="PRO" id="PR:P12502"/>
<dbReference type="Proteomes" id="UP000008173">
    <property type="component" value="Segment"/>
</dbReference>
<dbReference type="GO" id="GO:0043657">
    <property type="term" value="C:host cell"/>
    <property type="evidence" value="ECO:0007669"/>
    <property type="project" value="GOC"/>
</dbReference>
<dbReference type="GO" id="GO:0030430">
    <property type="term" value="C:host cell cytoplasm"/>
    <property type="evidence" value="ECO:0007669"/>
    <property type="project" value="UniProtKB-SubCell"/>
</dbReference>
<dbReference type="GO" id="GO:0042025">
    <property type="term" value="C:host cell nucleus"/>
    <property type="evidence" value="ECO:0007669"/>
    <property type="project" value="UniProtKB-SubCell"/>
</dbReference>
<dbReference type="GO" id="GO:0020002">
    <property type="term" value="C:host cell plasma membrane"/>
    <property type="evidence" value="ECO:0007669"/>
    <property type="project" value="UniProtKB-SubCell"/>
</dbReference>
<dbReference type="GO" id="GO:0016020">
    <property type="term" value="C:membrane"/>
    <property type="evidence" value="ECO:0007669"/>
    <property type="project" value="UniProtKB-KW"/>
</dbReference>
<dbReference type="GO" id="GO:0019013">
    <property type="term" value="C:viral nucleocapsid"/>
    <property type="evidence" value="ECO:0007669"/>
    <property type="project" value="UniProtKB-KW"/>
</dbReference>
<dbReference type="GO" id="GO:0004190">
    <property type="term" value="F:aspartic-type endopeptidase activity"/>
    <property type="evidence" value="ECO:0007669"/>
    <property type="project" value="UniProtKB-KW"/>
</dbReference>
<dbReference type="GO" id="GO:0003677">
    <property type="term" value="F:DNA binding"/>
    <property type="evidence" value="ECO:0007669"/>
    <property type="project" value="UniProtKB-KW"/>
</dbReference>
<dbReference type="GO" id="GO:0003887">
    <property type="term" value="F:DNA-directed DNA polymerase activity"/>
    <property type="evidence" value="ECO:0007669"/>
    <property type="project" value="UniProtKB-KW"/>
</dbReference>
<dbReference type="GO" id="GO:0004533">
    <property type="term" value="F:exoribonuclease H activity"/>
    <property type="evidence" value="ECO:0007669"/>
    <property type="project" value="UniProtKB-EC"/>
</dbReference>
<dbReference type="GO" id="GO:0035613">
    <property type="term" value="F:RNA stem-loop binding"/>
    <property type="evidence" value="ECO:0007669"/>
    <property type="project" value="TreeGrafter"/>
</dbReference>
<dbReference type="GO" id="GO:0003964">
    <property type="term" value="F:RNA-directed DNA polymerase activity"/>
    <property type="evidence" value="ECO:0007669"/>
    <property type="project" value="UniProtKB-KW"/>
</dbReference>
<dbReference type="GO" id="GO:0004523">
    <property type="term" value="F:RNA-DNA hybrid ribonuclease activity"/>
    <property type="evidence" value="ECO:0007669"/>
    <property type="project" value="InterPro"/>
</dbReference>
<dbReference type="GO" id="GO:0005198">
    <property type="term" value="F:structural molecule activity"/>
    <property type="evidence" value="ECO:0007669"/>
    <property type="project" value="InterPro"/>
</dbReference>
<dbReference type="GO" id="GO:0008270">
    <property type="term" value="F:zinc ion binding"/>
    <property type="evidence" value="ECO:0007669"/>
    <property type="project" value="UniProtKB-KW"/>
</dbReference>
<dbReference type="GO" id="GO:0015074">
    <property type="term" value="P:DNA integration"/>
    <property type="evidence" value="ECO:0007669"/>
    <property type="project" value="UniProtKB-KW"/>
</dbReference>
<dbReference type="GO" id="GO:0006310">
    <property type="term" value="P:DNA recombination"/>
    <property type="evidence" value="ECO:0007669"/>
    <property type="project" value="UniProtKB-KW"/>
</dbReference>
<dbReference type="GO" id="GO:0075713">
    <property type="term" value="P:establishment of integrated proviral latency"/>
    <property type="evidence" value="ECO:0007669"/>
    <property type="project" value="UniProtKB-KW"/>
</dbReference>
<dbReference type="GO" id="GO:0006508">
    <property type="term" value="P:proteolysis"/>
    <property type="evidence" value="ECO:0007669"/>
    <property type="project" value="UniProtKB-KW"/>
</dbReference>
<dbReference type="GO" id="GO:0046718">
    <property type="term" value="P:symbiont entry into host cell"/>
    <property type="evidence" value="ECO:0007669"/>
    <property type="project" value="UniProtKB-KW"/>
</dbReference>
<dbReference type="GO" id="GO:0039657">
    <property type="term" value="P:symbiont-mediated suppression of host gene expression"/>
    <property type="evidence" value="ECO:0007669"/>
    <property type="project" value="UniProtKB-KW"/>
</dbReference>
<dbReference type="GO" id="GO:0044826">
    <property type="term" value="P:viral genome integration into host DNA"/>
    <property type="evidence" value="ECO:0007669"/>
    <property type="project" value="UniProtKB-KW"/>
</dbReference>
<dbReference type="GO" id="GO:0075732">
    <property type="term" value="P:viral penetration into host nucleus"/>
    <property type="evidence" value="ECO:0007669"/>
    <property type="project" value="UniProtKB-KW"/>
</dbReference>
<dbReference type="GO" id="GO:0075523">
    <property type="term" value="P:viral translational frameshifting"/>
    <property type="evidence" value="ECO:0007669"/>
    <property type="project" value="UniProtKB-KW"/>
</dbReference>
<dbReference type="CDD" id="cd05482">
    <property type="entry name" value="HIV_retropepsin_like"/>
    <property type="match status" value="1"/>
</dbReference>
<dbReference type="Gene3D" id="1.10.10.200">
    <property type="match status" value="1"/>
</dbReference>
<dbReference type="Gene3D" id="1.10.1200.30">
    <property type="match status" value="1"/>
</dbReference>
<dbReference type="Gene3D" id="3.30.70.270">
    <property type="match status" value="3"/>
</dbReference>
<dbReference type="Gene3D" id="2.40.70.10">
    <property type="entry name" value="Acid Proteases"/>
    <property type="match status" value="1"/>
</dbReference>
<dbReference type="Gene3D" id="3.10.10.10">
    <property type="entry name" value="HIV Type 1 Reverse Transcriptase, subunit A, domain 1"/>
    <property type="match status" value="1"/>
</dbReference>
<dbReference type="Gene3D" id="1.10.375.10">
    <property type="entry name" value="Human Immunodeficiency Virus Type 1 Capsid Protein"/>
    <property type="match status" value="1"/>
</dbReference>
<dbReference type="Gene3D" id="1.10.150.90">
    <property type="entry name" value="Immunodeficiency lentiviruses, gag gene matrix protein p17"/>
    <property type="match status" value="1"/>
</dbReference>
<dbReference type="Gene3D" id="2.30.30.10">
    <property type="entry name" value="Integrase, C-terminal domain superfamily, retroviral"/>
    <property type="match status" value="1"/>
</dbReference>
<dbReference type="Gene3D" id="3.30.420.10">
    <property type="entry name" value="Ribonuclease H-like superfamily/Ribonuclease H"/>
    <property type="match status" value="2"/>
</dbReference>
<dbReference type="Gene3D" id="1.20.5.760">
    <property type="entry name" value="Single helix bin"/>
    <property type="match status" value="1"/>
</dbReference>
<dbReference type="Gene3D" id="4.10.60.10">
    <property type="entry name" value="Zinc finger, CCHC-type"/>
    <property type="match status" value="1"/>
</dbReference>
<dbReference type="InterPro" id="IPR001969">
    <property type="entry name" value="Aspartic_peptidase_AS"/>
</dbReference>
<dbReference type="InterPro" id="IPR043502">
    <property type="entry name" value="DNA/RNA_pol_sf"/>
</dbReference>
<dbReference type="InterPro" id="IPR045345">
    <property type="entry name" value="Gag_p24_C"/>
</dbReference>
<dbReference type="InterPro" id="IPR017856">
    <property type="entry name" value="Integrase-like_N"/>
</dbReference>
<dbReference type="InterPro" id="IPR036862">
    <property type="entry name" value="Integrase_C_dom_sf_retrovir"/>
</dbReference>
<dbReference type="InterPro" id="IPR001037">
    <property type="entry name" value="Integrase_C_retrovir"/>
</dbReference>
<dbReference type="InterPro" id="IPR001584">
    <property type="entry name" value="Integrase_cat-core"/>
</dbReference>
<dbReference type="InterPro" id="IPR003308">
    <property type="entry name" value="Integrase_Zn-bd_dom_N"/>
</dbReference>
<dbReference type="InterPro" id="IPR000071">
    <property type="entry name" value="Lentvrl_matrix_N"/>
</dbReference>
<dbReference type="InterPro" id="IPR012344">
    <property type="entry name" value="Matrix_HIV/RSV_N"/>
</dbReference>
<dbReference type="InterPro" id="IPR001995">
    <property type="entry name" value="Peptidase_A2_cat"/>
</dbReference>
<dbReference type="InterPro" id="IPR021109">
    <property type="entry name" value="Peptidase_aspartic_dom_sf"/>
</dbReference>
<dbReference type="InterPro" id="IPR034170">
    <property type="entry name" value="Retropepsin-like_cat_dom"/>
</dbReference>
<dbReference type="InterPro" id="IPR018061">
    <property type="entry name" value="Retropepsins"/>
</dbReference>
<dbReference type="InterPro" id="IPR008916">
    <property type="entry name" value="Retrov_capsid_C"/>
</dbReference>
<dbReference type="InterPro" id="IPR008919">
    <property type="entry name" value="Retrov_capsid_N"/>
</dbReference>
<dbReference type="InterPro" id="IPR010999">
    <property type="entry name" value="Retrovr_matrix"/>
</dbReference>
<dbReference type="InterPro" id="IPR043128">
    <property type="entry name" value="Rev_trsase/Diguanyl_cyclase"/>
</dbReference>
<dbReference type="InterPro" id="IPR012337">
    <property type="entry name" value="RNaseH-like_sf"/>
</dbReference>
<dbReference type="InterPro" id="IPR002156">
    <property type="entry name" value="RNaseH_domain"/>
</dbReference>
<dbReference type="InterPro" id="IPR036397">
    <property type="entry name" value="RNaseH_sf"/>
</dbReference>
<dbReference type="InterPro" id="IPR000477">
    <property type="entry name" value="RT_dom"/>
</dbReference>
<dbReference type="InterPro" id="IPR010659">
    <property type="entry name" value="RVT_connect"/>
</dbReference>
<dbReference type="InterPro" id="IPR010661">
    <property type="entry name" value="RVT_thumb"/>
</dbReference>
<dbReference type="InterPro" id="IPR001878">
    <property type="entry name" value="Znf_CCHC"/>
</dbReference>
<dbReference type="InterPro" id="IPR036875">
    <property type="entry name" value="Znf_CCHC_sf"/>
</dbReference>
<dbReference type="PANTHER" id="PTHR41694">
    <property type="entry name" value="ENDOGENOUS RETROVIRUS GROUP K MEMBER POL PROTEIN"/>
    <property type="match status" value="1"/>
</dbReference>
<dbReference type="PANTHER" id="PTHR41694:SF3">
    <property type="entry name" value="RNA-DIRECTED DNA POLYMERASE-RELATED"/>
    <property type="match status" value="1"/>
</dbReference>
<dbReference type="Pfam" id="PF00540">
    <property type="entry name" value="Gag_p17"/>
    <property type="match status" value="1"/>
</dbReference>
<dbReference type="Pfam" id="PF00607">
    <property type="entry name" value="Gag_p24"/>
    <property type="match status" value="1"/>
</dbReference>
<dbReference type="Pfam" id="PF19317">
    <property type="entry name" value="Gag_p24_C"/>
    <property type="match status" value="1"/>
</dbReference>
<dbReference type="Pfam" id="PF00552">
    <property type="entry name" value="IN_DBD_C"/>
    <property type="match status" value="1"/>
</dbReference>
<dbReference type="Pfam" id="PF02022">
    <property type="entry name" value="Integrase_Zn"/>
    <property type="match status" value="1"/>
</dbReference>
<dbReference type="Pfam" id="PF00075">
    <property type="entry name" value="RNase_H"/>
    <property type="match status" value="1"/>
</dbReference>
<dbReference type="Pfam" id="PF00665">
    <property type="entry name" value="rve"/>
    <property type="match status" value="1"/>
</dbReference>
<dbReference type="Pfam" id="PF00077">
    <property type="entry name" value="RVP"/>
    <property type="match status" value="1"/>
</dbReference>
<dbReference type="Pfam" id="PF00078">
    <property type="entry name" value="RVT_1"/>
    <property type="match status" value="1"/>
</dbReference>
<dbReference type="Pfam" id="PF06815">
    <property type="entry name" value="RVT_connect"/>
    <property type="match status" value="1"/>
</dbReference>
<dbReference type="Pfam" id="PF06817">
    <property type="entry name" value="RVT_thumb"/>
    <property type="match status" value="1"/>
</dbReference>
<dbReference type="Pfam" id="PF00098">
    <property type="entry name" value="zf-CCHC"/>
    <property type="match status" value="2"/>
</dbReference>
<dbReference type="PRINTS" id="PR00234">
    <property type="entry name" value="HIV1MATRIX"/>
</dbReference>
<dbReference type="SMART" id="SM00343">
    <property type="entry name" value="ZnF_C2HC"/>
    <property type="match status" value="2"/>
</dbReference>
<dbReference type="SUPFAM" id="SSF50630">
    <property type="entry name" value="Acid proteases"/>
    <property type="match status" value="1"/>
</dbReference>
<dbReference type="SUPFAM" id="SSF50122">
    <property type="entry name" value="DNA-binding domain of retroviral integrase"/>
    <property type="match status" value="1"/>
</dbReference>
<dbReference type="SUPFAM" id="SSF56672">
    <property type="entry name" value="DNA/RNA polymerases"/>
    <property type="match status" value="1"/>
</dbReference>
<dbReference type="SUPFAM" id="SSF46919">
    <property type="entry name" value="N-terminal Zn binding domain of HIV integrase"/>
    <property type="match status" value="1"/>
</dbReference>
<dbReference type="SUPFAM" id="SSF47836">
    <property type="entry name" value="Retroviral matrix proteins"/>
    <property type="match status" value="1"/>
</dbReference>
<dbReference type="SUPFAM" id="SSF47353">
    <property type="entry name" value="Retrovirus capsid dimerization domain-like"/>
    <property type="match status" value="1"/>
</dbReference>
<dbReference type="SUPFAM" id="SSF47943">
    <property type="entry name" value="Retrovirus capsid protein, N-terminal core domain"/>
    <property type="match status" value="1"/>
</dbReference>
<dbReference type="SUPFAM" id="SSF57756">
    <property type="entry name" value="Retrovirus zinc finger-like domains"/>
    <property type="match status" value="1"/>
</dbReference>
<dbReference type="SUPFAM" id="SSF53098">
    <property type="entry name" value="Ribonuclease H-like"/>
    <property type="match status" value="2"/>
</dbReference>
<dbReference type="PROSITE" id="PS50175">
    <property type="entry name" value="ASP_PROT_RETROV"/>
    <property type="match status" value="1"/>
</dbReference>
<dbReference type="PROSITE" id="PS00141">
    <property type="entry name" value="ASP_PROTEASE"/>
    <property type="match status" value="1"/>
</dbReference>
<dbReference type="PROSITE" id="PS50994">
    <property type="entry name" value="INTEGRASE"/>
    <property type="match status" value="1"/>
</dbReference>
<dbReference type="PROSITE" id="PS51027">
    <property type="entry name" value="INTEGRASE_DBD"/>
    <property type="match status" value="1"/>
</dbReference>
<dbReference type="PROSITE" id="PS50879">
    <property type="entry name" value="RNASE_H_1"/>
    <property type="match status" value="1"/>
</dbReference>
<dbReference type="PROSITE" id="PS50878">
    <property type="entry name" value="RT_POL"/>
    <property type="match status" value="1"/>
</dbReference>
<dbReference type="PROSITE" id="PS50158">
    <property type="entry name" value="ZF_CCHC"/>
    <property type="match status" value="2"/>
</dbReference>
<dbReference type="PROSITE" id="PS50876">
    <property type="entry name" value="ZF_INTEGRASE"/>
    <property type="match status" value="1"/>
</dbReference>
<gene>
    <name type="primary">gag-pol</name>
</gene>
<comment type="function">
    <text evidence="1">Gag-Pol polyprotein and Gag polyprotein may regulate their own translation, by the binding genomic RNA in the 5'-UTR. At low concentration, Gag-Pol and Gag would promote translation, whereas at high concentration, the polyproteins encapsidate genomic RNA and then shut off translation (By similarity).</text>
</comment>
<comment type="function">
    <text evidence="1">Matrix protein p17 has two main functions: in infected cell, it targets Gag and Gag-pol polyproteins to the plasma membrane via a multipartite membrane-binding signal, that includes its myristointegration complex. The myristoylation signal and the NLS exert conflicting influences its subcellular localization. The key regulation of these motifs might be phosphorylation of a portion of MA molecules on the C-terminal tyrosine at the time of virus maturation, by virion-associated cellular tyrosine kinase. Implicated in the release from host cell mediated by Vpu (By similarity).</text>
</comment>
<comment type="function">
    <text evidence="1">Capsid protein p24 forms the conical core that encapsulates the genomic RNA-nucleocapsid complex in the virion. The core is constituted by capsid protein hexamer subunits. The core is disassembled soon after virion entry. Interaction with host PPIA/CYPA protects the virus from restriction by host TRIM5-alpha and from an unknown antiviral activity in host cells. This capsid restriction by TRIM5 is one of the factors which restricts SIV to the simian species (By similarity).</text>
</comment>
<comment type="function">
    <text evidence="1">Nucleocapsid protein p7 encapsulates and protects viral dimeric unspliced (genomic) RNA. Binds these RNAs through its zinc fingers. Facilitates rearangement of nucleic acid secondary structure during retrotranscription of genomic RNA. This capability is referred to as nucleic acid chaperone activity (By similarity).</text>
</comment>
<comment type="function">
    <text evidence="10">The aspartyl protease mediates proteolytic cleavages of Gag and Gag-Pol polyproteins during or shortly after the release of the virion from the plasma membrane. Cleavages take place as an ordered, step-wise cascade to yield mature proteins. This process is called maturation. Displays maximal activity during the budding process just prior to particle release from the cell. Also cleaves Nef and Vif, probably concomitantly with viral structural proteins on maturation of virus particles. Hydrolyzes host EIF4GI and PABP1 in order to shut off the capped cellular mRNA translation. The resulting inhibition of cellular protein synthesis serves to ensure maximal viral gene expression and to evade host immune response (By similarity).</text>
</comment>
<comment type="function">
    <text evidence="1">Reverse transcriptase/ribonuclease H (RT) is a multifunctional enzyme that converts the viral dimeric RNA genome into dsDNA in the cytoplasm, shortly after virus entry into the cell. This enzyme displays a DNA polymerase activity that can copy either DNA or RNA templates, and a ribonuclease H (RNase H) activity that cleaves the RNA strand of RNA-DNA heteroduplexes in a partially processive 3' to 5' endonucleasic mode. Conversion of viral genomic RNA into dsDNA requires many steps. A tRNA binds to the primer-binding site (PBS) situated at the 5'-end of the viral RNA. RT uses the 3' end of the tRNA primer to perform a short round of RNA-dependent minus-strand DNA synthesis. The reading proceeds through the U5 region and ends after the repeated (R) region which is present at both ends of viral RNA. The portion of the RNA-DNA heteroduplex is digested by the RNase H, resulting in a ssDNA product attached to the tRNA primer. This ssDNA/tRNA hybridizes with the identical R region situated at the 3' end of viral RNA. This template exchange, known as minus-strand DNA strong stop transfer, can be either intra- or intermolecular. RT uses the 3' end of this newly synthesized short ssDNA to perform the RNA-dependent minus-strand DNA synthesis of the whole template. RNase H digests the RNA template except for two polypurine tracts (PPTs) situated at the 5'-end and near the center of the genome. It is not clear if both polymerase and RNase H activities are simultaneous. RNase H can probably proceed both in a polymerase-dependent (RNA cut into small fragments by the same RT performing DNA synthesis) and a polymerase-independent mode (cleavage of remaining RNA fragments by free RTs). Secondly, RT performs DNA-directed plus-strand DNA synthesis using the PPTs that have not been removed by RNase H as primers. PPTs and tRNA primers are then removed by RNase H. The 3' and 5' ssDNA PBS regions hybridize to form a circular dsDNA intermediate. Strand displacement synthesis by RT to the PBS and PPT ends produces a blunt ended, linear dsDNA copy of the viral genome that includes long terminal repeats (LTRs) at both ends (By similarity).</text>
</comment>
<comment type="function">
    <text evidence="1">Integrase catalyzes viral DNA integration into the host chromosome, by performing a series of DNA cutting and joining reactions. This enzyme activity takes place after virion entry into a cell and reverse transcription of the RNA genome in dsDNA. The first step in the integration process is 3' processing. This step requires a complex comprising the viral genome, matrix protein, Vpr and integrase. This complex is called the pre-integration complex (PIC). The integrase protein removes 2 nucleotides from each 3' end of the viral DNA, leaving recessed CA OH's at the 3' ends. In the second step, the PIC enters cell nucleus. This process is mediated through integrase and Vpr proteins, and allows the virus to infect a non dividing cell. This ability to enter the nucleus is specific of lentiviruses, other retroviruses cannot and rely on cell division to access cell chromosomes. In the third step, termed strand transfer, the integrase protein joins the previously processed 3' ends to the 5' ends of strands of target cellular DNA at the site of integration. The 5'-ends are produced by integrase-catalyzed staggered cuts, 5 bp apart. A Y-shaped, gapped, recombination intermediate results, with the 5'-ends of the viral DNA strands and the 3' ends of target DNA strands remaining unjoined, flanking a gap of 5 bp. The last step is viral DNA integration into host chromosome. This involves host DNA repair synthesis in which the 5 bp gaps between the unjoined strands are filled in and then ligated. Since this process occurs at both cuts flanking the SIV genome, a 5 bp duplication of host DNA is produced at the ends of SIV integration. Alternatively, Integrase may catalyze the excision of viral DNA just after strand transfer, this is termed disintegration (By similarity).</text>
</comment>
<comment type="catalytic activity">
    <reaction evidence="10">
        <text>Specific for a P1 residue that is hydrophobic, and P1' variable, but often Pro.</text>
        <dbReference type="EC" id="3.4.23.16"/>
    </reaction>
</comment>
<comment type="catalytic activity">
    <reaction>
        <text>Endohydrolysis of RNA in RNA/DNA hybrids. Three different cleavage modes: 1. sequence-specific internal cleavage of RNA. Human immunodeficiency virus type 1 and Moloney murine leukemia virus enzymes prefer to cleave the RNA strand one nucleotide away from the RNA-DNA junction. 2. RNA 5'-end directed cleavage 13-19 nucleotides from the RNA end. 3. DNA 3'-end directed cleavage 15-20 nucleotides away from the primer terminus.</text>
        <dbReference type="EC" id="3.1.26.13"/>
    </reaction>
</comment>
<comment type="catalytic activity">
    <reaction>
        <text>3'-end directed exonucleolytic cleavage of viral RNA-DNA hybrid.</text>
        <dbReference type="EC" id="3.1.13.2"/>
    </reaction>
</comment>
<comment type="catalytic activity">
    <reaction evidence="11">
        <text>DNA(n) + a 2'-deoxyribonucleoside 5'-triphosphate = DNA(n+1) + diphosphate</text>
        <dbReference type="Rhea" id="RHEA:22508"/>
        <dbReference type="Rhea" id="RHEA-COMP:17339"/>
        <dbReference type="Rhea" id="RHEA-COMP:17340"/>
        <dbReference type="ChEBI" id="CHEBI:33019"/>
        <dbReference type="ChEBI" id="CHEBI:61560"/>
        <dbReference type="ChEBI" id="CHEBI:173112"/>
        <dbReference type="EC" id="2.7.7.49"/>
    </reaction>
</comment>
<comment type="catalytic activity">
    <reaction evidence="11">
        <text>DNA(n) + a 2'-deoxyribonucleoside 5'-triphosphate = DNA(n+1) + diphosphate</text>
        <dbReference type="Rhea" id="RHEA:22508"/>
        <dbReference type="Rhea" id="RHEA-COMP:17339"/>
        <dbReference type="Rhea" id="RHEA-COMP:17340"/>
        <dbReference type="ChEBI" id="CHEBI:33019"/>
        <dbReference type="ChEBI" id="CHEBI:61560"/>
        <dbReference type="ChEBI" id="CHEBI:173112"/>
        <dbReference type="EC" id="2.7.7.7"/>
    </reaction>
</comment>
<comment type="cofactor">
    <cofactor evidence="1">
        <name>Mg(2+)</name>
        <dbReference type="ChEBI" id="CHEBI:18420"/>
    </cofactor>
    <text evidence="1">Binds 2 magnesium ions for reverse transcriptase polymerase activity.</text>
</comment>
<comment type="cofactor">
    <cofactor evidence="1">
        <name>Mg(2+)</name>
        <dbReference type="ChEBI" id="CHEBI:18420"/>
    </cofactor>
    <text evidence="1">Binds 2 magnesium ions for ribonuclease H (RNase H) activity. Substrate-binding is a precondition for magnesium binding.</text>
</comment>
<comment type="cofactor">
    <cofactor evidence="1">
        <name>Mg(2+)</name>
        <dbReference type="ChEBI" id="CHEBI:18420"/>
    </cofactor>
    <text evidence="1">Magnesium ions are required for integrase activity. Binds at least 1, maybe 2 magnesium ions.</text>
</comment>
<comment type="activity regulation">
    <text>The viral protease is inhibited by many synthetic protease inhibitors (PIs), such as amprenavir, atazanavir, indinavir, loprinavir, nelfinavir, ritonavir and saquinavir. RT can be inhibited either by nucleoside RT inhibitors (NRTIs) or by non nucleoside RT inhibitors (NNRTIs). NRTIs act as chain terminators, whereas NNRTIs inhibit DNA polymerization by binding a small hydrophobic pocket near the RT active site and inducing an allosteric change in this region. Classical NRTIs are abacavir, adefovir (PMEA), didanosine (ddI), lamivudine (3TC), stavudine (d4T), tenofovir (PMPA), zalcitabine (ddC), and zidovudine (AZT). Classical NNRTIs are atevirdine (BHAP U-87201E), delavirdine, efavirenz (DMP-266), emivirine (I-EBU), and nevirapine (BI-RG-587). The tritherapies used as a basic effective treatment of AIDS associate two NRTIs and one NNRTI. Use of protease inhibitors in tritherapy regimens permit more ambitious therapeutic strategies.</text>
</comment>
<comment type="subunit">
    <molecule>Matrix protein p17</molecule>
    <text evidence="5 6">Homotrimer. Interacts with gp41 (via C-terminus).</text>
</comment>
<comment type="subunit">
    <molecule>Protease</molecule>
    <text evidence="4 7">Homodimer. The active site consists of two apposed aspartic acid residues.</text>
</comment>
<comment type="subunit">
    <molecule>Reverse transcriptase/ribonuclease H</molecule>
    <text evidence="2">Heterodimer of p66 RT and p51 RT (RT p66/p51). Heterodimerization of RT is essential for DNA polymerase activity. Despite the sequence identities, p66 RT and p51 RT have distinct folding.</text>
</comment>
<comment type="subunit">
    <molecule>Integrase</molecule>
    <text evidence="3">Homotetramer; may further associate as a homohexadecamer (By similarity).</text>
</comment>
<comment type="subcellular location">
    <molecule>Matrix protein p17</molecule>
    <subcellularLocation>
        <location evidence="18">Virion</location>
    </subcellularLocation>
    <subcellularLocation>
        <location evidence="1">Host nucleus</location>
    </subcellularLocation>
    <subcellularLocation>
        <location evidence="1">Host cytoplasm</location>
    </subcellularLocation>
    <subcellularLocation>
        <location evidence="18">Host cell membrane</location>
        <topology evidence="18">Lipid-anchor</topology>
    </subcellularLocation>
    <text evidence="1">Following virus entry, the nuclear localization signal (NLS) of the matrix protein participates with Vpr to the nuclear localization of the viral genome. During virus production, the nuclear export activity of the matrix protein counteracts the NLS to maintain the Gag and Gag-Pol polyproteins in the cytoplasm, thereby directing unspliced RNA to the plasma membrane (By similarity).</text>
</comment>
<comment type="subcellular location">
    <molecule>Capsid protein p24</molecule>
    <subcellularLocation>
        <location evidence="18">Virion</location>
    </subcellularLocation>
</comment>
<comment type="subcellular location">
    <molecule>Nucleocapsid protein p7</molecule>
    <subcellularLocation>
        <location evidence="18">Virion</location>
    </subcellularLocation>
</comment>
<comment type="subcellular location">
    <molecule>Reverse transcriptase/ribonuclease H</molecule>
    <subcellularLocation>
        <location evidence="18">Virion</location>
    </subcellularLocation>
</comment>
<comment type="subcellular location">
    <molecule>Integrase</molecule>
    <subcellularLocation>
        <location evidence="18">Virion</location>
    </subcellularLocation>
    <subcellularLocation>
        <location evidence="18">Host nucleus</location>
    </subcellularLocation>
    <subcellularLocation>
        <location evidence="18">Host cytoplasm</location>
    </subcellularLocation>
    <text evidence="18">Nuclear at initial phase, cytoplasmic at assembly.</text>
</comment>
<comment type="alternative products">
    <event type="ribosomal frameshifting"/>
    <isoform>
        <id>P12502-1</id>
        <name>Gag-Pol polyprotein</name>
        <sequence type="displayed"/>
    </isoform>
    <isoform>
        <id>P12496-1</id>
        <name>Gag polyprotein</name>
        <sequence type="external"/>
    </isoform>
    <text>Translation results in the formation of the Gag polyprotein most of the time. Ribosomal frameshifting at the gag-pol genes boundary occurs at low frequency and produces the Gag-Pol polyprotein. This strategy of translation probably allows the virus to modulate the quantity of each viral protein. Maintenance of a correct Gag to Gag-Pol ratio is essential for RNA dimerization and viral infectivity.</text>
</comment>
<comment type="domain">
    <text evidence="1">The p66 RT is structured in five subdomains: finger, palm, thumb, connection and RNase H. Within the palm subdomain, the 'primer grip' region is thought to be involved in the positioning of the primer terminus for accommodating the incoming nucleotide. The RNase H domain stabilizes the association of RT with primer-template (By similarity).</text>
</comment>
<comment type="domain">
    <text evidence="1">The tryptophan repeat motif is involved in RT p66/p51 dimerization.</text>
</comment>
<comment type="PTM">
    <text evidence="11">Specific enzymatic cleavages by the viral protease yield mature proteins. The protease is released by autocatalytic cleavage. The polyprotein is cleaved during and after budding, this process is termed maturation. Proteolytic cleavage of p66 RT removes the RNase H domain to yield the p51 RT subunit.</text>
</comment>
<comment type="PTM">
    <text>Capsid protein p24 is phosphorylated.</text>
</comment>
<comment type="miscellaneous">
    <text>The reverse transcriptase is an error-prone enzyme that lacks a proof-reading function. High mutations rate is a direct consequence of this characteristic. RT also displays frequent template switching leading to high recombination rate. Recombination mostly occurs between homologous regions of the two copackaged RNA genomes. If these two RNA molecules derive from different viral strains, reverse transcription will give rise to highly recombinated proviral DNAs.</text>
</comment>
<comment type="miscellaneous">
    <molecule>Isoform Gag-Pol polyprotein</molecule>
    <text>Produced by -1 ribosomal frameshifting.</text>
</comment>
<accession>P12502</accession>
<organismHost>
    <name type="scientific">Cercopithecidae</name>
    <name type="common">Old World monkeys</name>
    <dbReference type="NCBI Taxonomy" id="9527"/>
</organismHost>
<proteinExistence type="inferred from homology"/>
<sequence>MGARNSVLSGKEADELEKVRLRPNGKKKYMLKHVVWAANELDRFGLAESLLDNKEGCQKILSVLAPLVPTGSENLKSLYNTVCVIWCIHAEEKVKHTEEAKQIVQRHLVVETGTADRMPATSRPTAPPSGRGGNYPVQQVGGNYVHLPLSPRTLNAWVKLVEEKKFGAEVVPGFQALSEGCTPYDINQMLNCVGEHQAAMQIIREIINEEAADWDLQHPQPGPLPAGQLREPRGSDIAGTTSTVDEQIQWMYRQQNPIPVGNIYRRWIQLGLQKCVRMYNPTNILDVKQGPKEPFQSYVDRFYKSLRAEQTDPAVKNWMTQTLLIQNANPDCKLVLKGLGMNPTLEEMLTACQGVGGPGQKARLMAEALKEALRPDQLPFAAVQQKGQRKTIKCWNCGKEGHSAKQCRAPRRQGCWKCGKTGHVMAKCPERQAGFFRAWPMGKEAPQFPHGPDASGADTNCSPRGSSCGSTEELHEDGQKAEGEQRETLQGGDRGFAAPQFSLWRRPVVTAYIEEQPVEVLLDTGADDSIVAGIELGPNYTPKIVGGIGGFINTKEYKDVKIKVLGKVIKGTIMTGDTPINIFGRNLLTAMGMSLNLPIAKVEPIKVTLKPGKEGPKLRQWPLSKEKIIALREICEKMEKDGQLEEAPPTNPYNTPTFAIKKKDKNKWRMLIDFRELNKVTQDFTEVQLGIPHPAGLAKRRRITVLDVGDAYFSIPLDEEFRQYTAFTLPSVNNAEPGKRYIYKVLPQGWKGSPAIFQYTMRNVLEPFRKANPDVTLIQYMDDILIASDRTDLEHDRVVLQLKELLNGIGFSTPEEKFQKDPPFQWMGYELWPTKWKLQKIELPQRETWTVNDIQKLVGVLNWAAQIYPGIKTKHLCRLIRGKMTLTEEVQWTEMAEAEYEENKIILSQEQEGCYYQEGKPIEATVIKSQDNQWSYKIHQEDKVLKVGKFAKVKNTHTNGVRLLAHVVQKIGKEALVIWGEVPKFHLPVEREIWEQWWTDYWQVTWIPDWDFVSTPPLVRLVFNLVKEPIQGAETFYVDGSCNRQSREGKAGYVTDRGRDKAKLLEQTTNQQAELEAFYLALADSGPKANIIVDSQYVMGIIAGQPTESESRLVNQIIEEMIKKEAIYVAWVPAHKGIGGNQEVDHLVSQGIRQVLFLKKIEPAQEEHEKYHSNVKELVFKFGLPRLVAKQIVDTCDKCHQKGEAIHGQVNAELGTWQMDCTHLEGKIIIVAVHVASGFIEAEVIPQETGRQTALFLLKLAGRWPITHLHTDNGANFTSQEVKMVAWWAGIEQTFGVPYNPQSQGVVEAMNHHLKTQIDRIREQANSIETIVLMAVHCMNFKRRGGIGDMTPAERLVNMITTEQEIQFQQSKNSKFKNFRVYYREGRDQLWKGPGELLWKGEGAVILKVGTEIKVVPRRKAKIIKDYGGGKELDSGSHLEDTGEAREVA</sequence>
<feature type="initiator methionine" description="Removed; by host" evidence="1">
    <location>
        <position position="1"/>
    </location>
</feature>
<feature type="chain" id="PRO_0000306055" description="Gag-Pol polyprotein">
    <location>
        <begin position="2"/>
        <end position="1449"/>
    </location>
</feature>
<feature type="chain" id="PRO_0000306056" description="Matrix protein p17" evidence="1">
    <location>
        <begin position="2"/>
        <end position="135"/>
    </location>
</feature>
<feature type="chain" id="PRO_0000306057" description="Capsid protein p24" evidence="1">
    <location>
        <begin position="136"/>
        <end position="365"/>
    </location>
</feature>
<feature type="chain" id="PRO_0000306058" description="Nucleocapsid protein p7" evidence="1">
    <location>
        <begin position="366"/>
        <end position="434"/>
    </location>
</feature>
<feature type="chain" id="PRO_0000306059" description="p6-pol" evidence="8">
    <location>
        <begin position="435"/>
        <end position="501"/>
    </location>
</feature>
<feature type="chain" id="PRO_0000306060" description="Protease" evidence="1">
    <location>
        <begin position="502"/>
        <end position="597"/>
    </location>
</feature>
<feature type="chain" id="PRO_0000306061" description="Reverse transcriptase/ribonuclease H" evidence="1">
    <location>
        <begin position="598"/>
        <end position="1156"/>
    </location>
</feature>
<feature type="chain" id="PRO_0000306062" description="p51 RT" evidence="1">
    <location>
        <begin position="598"/>
        <end position="1036"/>
    </location>
</feature>
<feature type="chain" id="PRO_0000306063" description="p15" evidence="1">
    <location>
        <begin position="1037"/>
        <end position="1156"/>
    </location>
</feature>
<feature type="chain" id="PRO_0000306064" description="Integrase" evidence="1">
    <location>
        <begin position="1157"/>
        <end position="1449"/>
    </location>
</feature>
<feature type="domain" description="Peptidase A2" evidence="10">
    <location>
        <begin position="518"/>
        <end position="587"/>
    </location>
</feature>
<feature type="domain" description="Reverse transcriptase" evidence="11">
    <location>
        <begin position="641"/>
        <end position="831"/>
    </location>
</feature>
<feature type="domain" description="RNase H type-1" evidence="12">
    <location>
        <begin position="1030"/>
        <end position="1153"/>
    </location>
</feature>
<feature type="domain" description="Integrase catalytic" evidence="14">
    <location>
        <begin position="1210"/>
        <end position="1360"/>
    </location>
</feature>
<feature type="zinc finger region" description="CCHC-type 1" evidence="9">
    <location>
        <begin position="392"/>
        <end position="409"/>
    </location>
</feature>
<feature type="zinc finger region" description="CCHC-type 2" evidence="9">
    <location>
        <begin position="413"/>
        <end position="430"/>
    </location>
</feature>
<feature type="zinc finger region" description="Integrase-type" evidence="13">
    <location>
        <begin position="1159"/>
        <end position="1200"/>
    </location>
</feature>
<feature type="DNA-binding region" description="Integrase-type" evidence="15">
    <location>
        <begin position="1379"/>
        <end position="1426"/>
    </location>
</feature>
<feature type="region of interest" description="Disordered" evidence="17">
    <location>
        <begin position="215"/>
        <end position="237"/>
    </location>
</feature>
<feature type="region of interest" description="Disordered" evidence="17">
    <location>
        <begin position="442"/>
        <end position="494"/>
    </location>
</feature>
<feature type="region of interest" description="RT 'primer grip'" evidence="1">
    <location>
        <begin position="824"/>
        <end position="832"/>
    </location>
</feature>
<feature type="short sequence motif" description="Nuclear export signal" evidence="1">
    <location>
        <begin position="16"/>
        <end position="22"/>
    </location>
</feature>
<feature type="short sequence motif" description="Nuclear localization signal" evidence="1">
    <location>
        <begin position="26"/>
        <end position="32"/>
    </location>
</feature>
<feature type="short sequence motif" description="Tryptophan repeat motif" evidence="1">
    <location>
        <begin position="994"/>
        <end position="1010"/>
    </location>
</feature>
<feature type="compositionally biased region" description="Polar residues" evidence="17">
    <location>
        <begin position="457"/>
        <end position="470"/>
    </location>
</feature>
<feature type="compositionally biased region" description="Basic and acidic residues" evidence="17">
    <location>
        <begin position="472"/>
        <end position="487"/>
    </location>
</feature>
<feature type="active site" description="For protease activity; shared with dimeric partner" evidence="16">
    <location>
        <position position="523"/>
    </location>
</feature>
<feature type="binding site" evidence="1">
    <location>
        <position position="707"/>
    </location>
    <ligand>
        <name>Mg(2+)</name>
        <dbReference type="ChEBI" id="CHEBI:18420"/>
        <label>1</label>
        <note>catalytic; for reverse transcriptase activity</note>
    </ligand>
</feature>
<feature type="binding site" evidence="1">
    <location>
        <position position="782"/>
    </location>
    <ligand>
        <name>Mg(2+)</name>
        <dbReference type="ChEBI" id="CHEBI:18420"/>
        <label>1</label>
        <note>catalytic; for reverse transcriptase activity</note>
    </ligand>
</feature>
<feature type="binding site" evidence="1">
    <location>
        <position position="783"/>
    </location>
    <ligand>
        <name>Mg(2+)</name>
        <dbReference type="ChEBI" id="CHEBI:18420"/>
        <label>1</label>
        <note>catalytic; for reverse transcriptase activity</note>
    </ligand>
</feature>
<feature type="binding site" evidence="1">
    <location>
        <position position="1039"/>
    </location>
    <ligand>
        <name>Mg(2+)</name>
        <dbReference type="ChEBI" id="CHEBI:18420"/>
        <label>2</label>
        <note>catalytic; for RNase H activity</note>
    </ligand>
</feature>
<feature type="binding site" evidence="1">
    <location>
        <position position="1074"/>
    </location>
    <ligand>
        <name>Mg(2+)</name>
        <dbReference type="ChEBI" id="CHEBI:18420"/>
        <label>2</label>
        <note>catalytic; for RNase H activity</note>
    </ligand>
</feature>
<feature type="binding site" evidence="1">
    <location>
        <position position="1094"/>
    </location>
    <ligand>
        <name>Mg(2+)</name>
        <dbReference type="ChEBI" id="CHEBI:18420"/>
        <label>2</label>
        <note>catalytic; for RNase H activity</note>
    </ligand>
</feature>
<feature type="binding site" evidence="1">
    <location>
        <position position="1145"/>
    </location>
    <ligand>
        <name>Mg(2+)</name>
        <dbReference type="ChEBI" id="CHEBI:18420"/>
        <label>2</label>
        <note>catalytic; for RNase H activity</note>
    </ligand>
</feature>
<feature type="binding site" evidence="13">
    <location>
        <position position="1168"/>
    </location>
    <ligand>
        <name>Zn(2+)</name>
        <dbReference type="ChEBI" id="CHEBI:29105"/>
    </ligand>
</feature>
<feature type="binding site" evidence="13">
    <location>
        <position position="1172"/>
    </location>
    <ligand>
        <name>Zn(2+)</name>
        <dbReference type="ChEBI" id="CHEBI:29105"/>
    </ligand>
</feature>
<feature type="binding site" evidence="13">
    <location>
        <position position="1196"/>
    </location>
    <ligand>
        <name>Zn(2+)</name>
        <dbReference type="ChEBI" id="CHEBI:29105"/>
    </ligand>
</feature>
<feature type="binding site" evidence="13">
    <location>
        <position position="1199"/>
    </location>
    <ligand>
        <name>Zn(2+)</name>
        <dbReference type="ChEBI" id="CHEBI:29105"/>
    </ligand>
</feature>
<feature type="binding site" evidence="1">
    <location>
        <position position="1220"/>
    </location>
    <ligand>
        <name>Mg(2+)</name>
        <dbReference type="ChEBI" id="CHEBI:18420"/>
        <label>3</label>
        <note>catalytic; for integrase activity</note>
    </ligand>
</feature>
<feature type="binding site" evidence="1">
    <location>
        <position position="1272"/>
    </location>
    <ligand>
        <name>Mg(2+)</name>
        <dbReference type="ChEBI" id="CHEBI:18420"/>
        <label>3</label>
        <note>catalytic; for integrase activity</note>
    </ligand>
</feature>
<feature type="site" description="Cleavage; by viral protease" evidence="1">
    <location>
        <begin position="135"/>
        <end position="136"/>
    </location>
</feature>
<feature type="site" description="Cis/trans isomerization of proline peptide bond; by human PPIA/CYPA" evidence="1">
    <location>
        <begin position="222"/>
        <end position="223"/>
    </location>
</feature>
<feature type="site" description="Cleavage; by viral protease" evidence="1">
    <location>
        <begin position="365"/>
        <end position="366"/>
    </location>
</feature>
<feature type="site" description="Cleavage; by viral protease" evidence="1">
    <location>
        <begin position="434"/>
        <end position="435"/>
    </location>
</feature>
<feature type="site" description="Cleavage; by viral protease" evidence="1">
    <location>
        <begin position="501"/>
        <end position="502"/>
    </location>
</feature>
<feature type="site" description="Cleavage; by viral protease" evidence="1">
    <location>
        <begin position="597"/>
        <end position="598"/>
    </location>
</feature>
<feature type="site" description="Essential for RT p66/p51 heterodimerization" evidence="1">
    <location>
        <position position="997"/>
    </location>
</feature>
<feature type="site" description="Essential for RT p66/p51 heterodimerization" evidence="1">
    <location>
        <position position="1010"/>
    </location>
</feature>
<feature type="site" description="Cleavage; by viral protease" evidence="1">
    <location>
        <begin position="1036"/>
        <end position="1037"/>
    </location>
</feature>
<feature type="site" description="Cleavage; by viral protease" evidence="1">
    <location>
        <begin position="1156"/>
        <end position="1157"/>
    </location>
</feature>
<feature type="lipid moiety-binding region" description="N-myristoyl glycine; by host" evidence="1">
    <location>
        <position position="2"/>
    </location>
</feature>
<evidence type="ECO:0000250" key="1"/>
<evidence type="ECO:0000250" key="2">
    <source>
        <dbReference type="UniProtKB" id="P03366"/>
    </source>
</evidence>
<evidence type="ECO:0000250" key="3">
    <source>
        <dbReference type="UniProtKB" id="P03367"/>
    </source>
</evidence>
<evidence type="ECO:0000250" key="4">
    <source>
        <dbReference type="UniProtKB" id="P04585"/>
    </source>
</evidence>
<evidence type="ECO:0000250" key="5">
    <source>
        <dbReference type="UniProtKB" id="P04591"/>
    </source>
</evidence>
<evidence type="ECO:0000250" key="6">
    <source>
        <dbReference type="UniProtKB" id="P12493"/>
    </source>
</evidence>
<evidence type="ECO:0000250" key="7">
    <source>
        <dbReference type="UniProtKB" id="P12497"/>
    </source>
</evidence>
<evidence type="ECO:0000255" key="8"/>
<evidence type="ECO:0000255" key="9">
    <source>
        <dbReference type="PROSITE-ProRule" id="PRU00047"/>
    </source>
</evidence>
<evidence type="ECO:0000255" key="10">
    <source>
        <dbReference type="PROSITE-ProRule" id="PRU00275"/>
    </source>
</evidence>
<evidence type="ECO:0000255" key="11">
    <source>
        <dbReference type="PROSITE-ProRule" id="PRU00405"/>
    </source>
</evidence>
<evidence type="ECO:0000255" key="12">
    <source>
        <dbReference type="PROSITE-ProRule" id="PRU00408"/>
    </source>
</evidence>
<evidence type="ECO:0000255" key="13">
    <source>
        <dbReference type="PROSITE-ProRule" id="PRU00450"/>
    </source>
</evidence>
<evidence type="ECO:0000255" key="14">
    <source>
        <dbReference type="PROSITE-ProRule" id="PRU00457"/>
    </source>
</evidence>
<evidence type="ECO:0000255" key="15">
    <source>
        <dbReference type="PROSITE-ProRule" id="PRU00506"/>
    </source>
</evidence>
<evidence type="ECO:0000255" key="16">
    <source>
        <dbReference type="PROSITE-ProRule" id="PRU10094"/>
    </source>
</evidence>
<evidence type="ECO:0000256" key="17">
    <source>
        <dbReference type="SAM" id="MobiDB-lite"/>
    </source>
</evidence>
<evidence type="ECO:0000305" key="18"/>
<keyword id="KW-0064">Aspartyl protease</keyword>
<keyword id="KW-0167">Capsid protein</keyword>
<keyword id="KW-0229">DNA integration</keyword>
<keyword id="KW-0233">DNA recombination</keyword>
<keyword id="KW-0238">DNA-binding</keyword>
<keyword id="KW-0239">DNA-directed DNA polymerase</keyword>
<keyword id="KW-0255">Endonuclease</keyword>
<keyword id="KW-1262">Eukaryotic host gene expression shutoff by virus</keyword>
<keyword id="KW-1193">Eukaryotic host translation shutoff by virus</keyword>
<keyword id="KW-1032">Host cell membrane</keyword>
<keyword id="KW-1035">Host cytoplasm</keyword>
<keyword id="KW-1190">Host gene expression shutoff by virus</keyword>
<keyword id="KW-1043">Host membrane</keyword>
<keyword id="KW-1048">Host nucleus</keyword>
<keyword id="KW-0945">Host-virus interaction</keyword>
<keyword id="KW-0378">Hydrolase</keyword>
<keyword id="KW-0449">Lipoprotein</keyword>
<keyword id="KW-0460">Magnesium</keyword>
<keyword id="KW-0472">Membrane</keyword>
<keyword id="KW-0479">Metal-binding</keyword>
<keyword id="KW-0511">Multifunctional enzyme</keyword>
<keyword id="KW-0519">Myristate</keyword>
<keyword id="KW-0540">Nuclease</keyword>
<keyword id="KW-0548">Nucleotidyltransferase</keyword>
<keyword id="KW-0597">Phosphoprotein</keyword>
<keyword id="KW-0645">Protease</keyword>
<keyword id="KW-0677">Repeat</keyword>
<keyword id="KW-0688">Ribosomal frameshifting</keyword>
<keyword id="KW-0694">RNA-binding</keyword>
<keyword id="KW-0695">RNA-directed DNA polymerase</keyword>
<keyword id="KW-0808">Transferase</keyword>
<keyword id="KW-1179">Viral genome integration</keyword>
<keyword id="KW-0543">Viral nucleoprotein</keyword>
<keyword id="KW-1163">Viral penetration into host nucleus</keyword>
<keyword id="KW-1188">Viral release from host cell</keyword>
<keyword id="KW-0946">Virion</keyword>
<keyword id="KW-0917">Virion maturation</keyword>
<keyword id="KW-1160">Virus entry into host cell</keyword>
<keyword id="KW-0862">Zinc</keyword>
<keyword id="KW-0863">Zinc-finger</keyword>
<protein>
    <recommendedName>
        <fullName>Gag-Pol polyprotein</fullName>
    </recommendedName>
    <alternativeName>
        <fullName>Pr160Gag-Pol</fullName>
    </alternativeName>
    <component>
        <recommendedName>
            <fullName>Matrix protein p17</fullName>
            <shortName>MA</shortName>
        </recommendedName>
    </component>
    <component>
        <recommendedName>
            <fullName>Capsid protein p24</fullName>
            <shortName>CA</shortName>
        </recommendedName>
    </component>
    <component>
        <recommendedName>
            <fullName>Nucleocapsid protein p7</fullName>
            <shortName>NC</shortName>
        </recommendedName>
    </component>
    <component>
        <recommendedName>
            <fullName>p6-pol</fullName>
            <shortName>p6*</shortName>
        </recommendedName>
    </component>
    <component>
        <recommendedName>
            <fullName>Protease</fullName>
            <ecNumber>3.4.23.16</ecNumber>
        </recommendedName>
        <alternativeName>
            <fullName>PR</fullName>
        </alternativeName>
        <alternativeName>
            <fullName>Retropepsin</fullName>
        </alternativeName>
    </component>
    <component>
        <recommendedName>
            <fullName>Reverse transcriptase/ribonuclease H</fullName>
            <ecNumber>2.7.7.49</ecNumber>
            <ecNumber>2.7.7.7</ecNumber>
            <ecNumber>3.1.26.13</ecNumber>
        </recommendedName>
        <alternativeName>
            <fullName>Exoribonuclease H</fullName>
            <ecNumber>3.1.13.2</ecNumber>
        </alternativeName>
        <alternativeName>
            <fullName>p66 RT</fullName>
        </alternativeName>
    </component>
    <component>
        <recommendedName>
            <fullName>p51 RT</fullName>
        </recommendedName>
    </component>
    <component>
        <recommendedName>
            <fullName>p15</fullName>
        </recommendedName>
    </component>
    <component>
        <recommendedName>
            <fullName>Integrase</fullName>
            <shortName>IN</shortName>
            <ecNumber evidence="4">2.7.7.-</ecNumber>
            <ecNumber evidence="4">3.1.-.-</ecNumber>
        </recommendedName>
    </component>
</protein>
<name>POL_SIVS4</name>
<organism>
    <name type="scientific">Simian immunodeficiency virus (isolate F236/smH4)</name>
    <name type="common">SIV-sm</name>
    <name type="synonym">Simian immunodeficiency virus sooty mangabey monkey</name>
    <dbReference type="NCBI Taxonomy" id="11737"/>
    <lineage>
        <taxon>Viruses</taxon>
        <taxon>Riboviria</taxon>
        <taxon>Pararnavirae</taxon>
        <taxon>Artverviricota</taxon>
        <taxon>Revtraviricetes</taxon>
        <taxon>Ortervirales</taxon>
        <taxon>Retroviridae</taxon>
        <taxon>Orthoretrovirinae</taxon>
        <taxon>Lentivirus</taxon>
        <taxon>Simian immunodeficiency virus</taxon>
    </lineage>
</organism>